<reference key="1">
    <citation type="journal article" date="2008" name="Genomics">
        <title>Evolution in the laboratory: the genome of Halobacterium salinarum strain R1 compared to that of strain NRC-1.</title>
        <authorList>
            <person name="Pfeiffer F."/>
            <person name="Schuster S.C."/>
            <person name="Broicher A."/>
            <person name="Falb M."/>
            <person name="Palm P."/>
            <person name="Rodewald K."/>
            <person name="Ruepp A."/>
            <person name="Soppa J."/>
            <person name="Tittor J."/>
            <person name="Oesterhelt D."/>
        </authorList>
    </citation>
    <scope>NUCLEOTIDE SEQUENCE [LARGE SCALE GENOMIC DNA]</scope>
    <source>
        <strain>ATCC 29341 / DSM 671 / R1</strain>
    </source>
</reference>
<proteinExistence type="inferred from homology"/>
<dbReference type="EMBL" id="AM774415">
    <property type="protein sequence ID" value="CAP13194.1"/>
    <property type="molecule type" value="Genomic_DNA"/>
</dbReference>
<dbReference type="RefSeq" id="WP_010902231.1">
    <property type="nucleotide sequence ID" value="NC_010364.1"/>
</dbReference>
<dbReference type="SMR" id="B0R382"/>
<dbReference type="EnsemblBacteria" id="CAP13194">
    <property type="protein sequence ID" value="CAP13194"/>
    <property type="gene ID" value="OE_1558R"/>
</dbReference>
<dbReference type="KEGG" id="hsl:OE_1558R"/>
<dbReference type="HOGENOM" id="CLU_191921_2_0_2"/>
<dbReference type="Proteomes" id="UP000001321">
    <property type="component" value="Chromosome"/>
</dbReference>
<dbReference type="GO" id="GO:0005886">
    <property type="term" value="C:plasma membrane"/>
    <property type="evidence" value="ECO:0007669"/>
    <property type="project" value="UniProtKB-SubCell"/>
</dbReference>
<dbReference type="GO" id="GO:0008320">
    <property type="term" value="F:protein transmembrane transporter activity"/>
    <property type="evidence" value="ECO:0007669"/>
    <property type="project" value="UniProtKB-UniRule"/>
</dbReference>
<dbReference type="GO" id="GO:0065002">
    <property type="term" value="P:intracellular protein transmembrane transport"/>
    <property type="evidence" value="ECO:0007669"/>
    <property type="project" value="UniProtKB-UniRule"/>
</dbReference>
<dbReference type="GO" id="GO:0009306">
    <property type="term" value="P:protein secretion"/>
    <property type="evidence" value="ECO:0007669"/>
    <property type="project" value="UniProtKB-UniRule"/>
</dbReference>
<dbReference type="GO" id="GO:0006605">
    <property type="term" value="P:protein targeting"/>
    <property type="evidence" value="ECO:0007669"/>
    <property type="project" value="UniProtKB-UniRule"/>
</dbReference>
<dbReference type="Gene3D" id="1.20.5.820">
    <property type="entry name" value="Preprotein translocase SecE subunit"/>
    <property type="match status" value="1"/>
</dbReference>
<dbReference type="HAMAP" id="MF_00422">
    <property type="entry name" value="SecE"/>
    <property type="match status" value="1"/>
</dbReference>
<dbReference type="InterPro" id="IPR023391">
    <property type="entry name" value="Prot_translocase_SecE_dom_sf"/>
</dbReference>
<dbReference type="InterPro" id="IPR008158">
    <property type="entry name" value="Translocase_Sec61-g"/>
</dbReference>
<dbReference type="InterPro" id="IPR001901">
    <property type="entry name" value="Translocase_SecE/Sec61-g"/>
</dbReference>
<dbReference type="NCBIfam" id="NF006910">
    <property type="entry name" value="PRK09400.1-6"/>
    <property type="match status" value="1"/>
</dbReference>
<dbReference type="NCBIfam" id="TIGR00327">
    <property type="entry name" value="secE_euk_arch"/>
    <property type="match status" value="1"/>
</dbReference>
<dbReference type="SUPFAM" id="SSF103456">
    <property type="entry name" value="Preprotein translocase SecE subunit"/>
    <property type="match status" value="1"/>
</dbReference>
<accession>B0R382</accession>
<feature type="chain" id="PRO_1000124131" description="Protein translocase subunit SecE">
    <location>
        <begin position="1"/>
        <end position="57"/>
    </location>
</feature>
<feature type="transmembrane region" description="Helical" evidence="1">
    <location>
        <begin position="34"/>
        <end position="54"/>
    </location>
</feature>
<protein>
    <recommendedName>
        <fullName evidence="1">Protein translocase subunit SecE</fullName>
    </recommendedName>
    <alternativeName>
        <fullName evidence="1">Protein transport protein Sec61 gamma subunit homolog</fullName>
    </alternativeName>
</protein>
<evidence type="ECO:0000255" key="1">
    <source>
        <dbReference type="HAMAP-Rule" id="MF_00422"/>
    </source>
</evidence>
<comment type="function">
    <text evidence="1">Essential subunit of the Sec protein translocation channel SecYEG. Clamps together the 2 halves of SecY. May contact the channel plug during translocation.</text>
</comment>
<comment type="subunit">
    <text evidence="1">Component of the Sec protein translocase complex. Heterotrimer consisting of SecY (alpha), SecG (beta) and SecE (gamma) subunits. The heterotrimers can form oligomers, although 1 heterotrimer is thought to be able to translocate proteins. Interacts with the ribosome. May interact with SecDF, and other proteins may be involved.</text>
</comment>
<comment type="subcellular location">
    <subcellularLocation>
        <location evidence="1">Cell membrane</location>
        <topology evidence="1">Single-pass membrane protein</topology>
    </subcellularLocation>
</comment>
<comment type="similarity">
    <text evidence="1">Belongs to the SecE/SEC61-gamma family.</text>
</comment>
<organism>
    <name type="scientific">Halobacterium salinarum (strain ATCC 29341 / DSM 671 / R1)</name>
    <dbReference type="NCBI Taxonomy" id="478009"/>
    <lineage>
        <taxon>Archaea</taxon>
        <taxon>Methanobacteriati</taxon>
        <taxon>Methanobacteriota</taxon>
        <taxon>Stenosarchaea group</taxon>
        <taxon>Halobacteria</taxon>
        <taxon>Halobacteriales</taxon>
        <taxon>Halobacteriaceae</taxon>
        <taxon>Halobacterium</taxon>
        <taxon>Halobacterium salinarum NRC-34001</taxon>
    </lineage>
</organism>
<sequence length="57" mass="6049">MDVPLELSAYTRVLRLASTPSWEEFSQIAKIAGAGILLIGAIGFLVFLIMGGIVSVI</sequence>
<name>SECE_HALS3</name>
<gene>
    <name evidence="1" type="primary">secE</name>
    <name type="ordered locus">OE_1558R</name>
</gene>
<keyword id="KW-1003">Cell membrane</keyword>
<keyword id="KW-0472">Membrane</keyword>
<keyword id="KW-0653">Protein transport</keyword>
<keyword id="KW-0811">Translocation</keyword>
<keyword id="KW-0812">Transmembrane</keyword>
<keyword id="KW-1133">Transmembrane helix</keyword>
<keyword id="KW-0813">Transport</keyword>